<organism>
    <name type="scientific">Prochlorococcus marinus (strain MIT 9301)</name>
    <dbReference type="NCBI Taxonomy" id="167546"/>
    <lineage>
        <taxon>Bacteria</taxon>
        <taxon>Bacillati</taxon>
        <taxon>Cyanobacteriota</taxon>
        <taxon>Cyanophyceae</taxon>
        <taxon>Synechococcales</taxon>
        <taxon>Prochlorococcaceae</taxon>
        <taxon>Prochlorococcus</taxon>
    </lineage>
</organism>
<comment type="function">
    <text evidence="1">Binds to the 23S rRNA.</text>
</comment>
<comment type="similarity">
    <text evidence="1">Belongs to the bacterial ribosomal protein bL9 family.</text>
</comment>
<feature type="chain" id="PRO_1000014830" description="Large ribosomal subunit protein bL9">
    <location>
        <begin position="1"/>
        <end position="151"/>
    </location>
</feature>
<reference key="1">
    <citation type="journal article" date="2007" name="PLoS Genet.">
        <title>Patterns and implications of gene gain and loss in the evolution of Prochlorococcus.</title>
        <authorList>
            <person name="Kettler G.C."/>
            <person name="Martiny A.C."/>
            <person name="Huang K."/>
            <person name="Zucker J."/>
            <person name="Coleman M.L."/>
            <person name="Rodrigue S."/>
            <person name="Chen F."/>
            <person name="Lapidus A."/>
            <person name="Ferriera S."/>
            <person name="Johnson J."/>
            <person name="Steglich C."/>
            <person name="Church G.M."/>
            <person name="Richardson P."/>
            <person name="Chisholm S.W."/>
        </authorList>
    </citation>
    <scope>NUCLEOTIDE SEQUENCE [LARGE SCALE GENOMIC DNA]</scope>
    <source>
        <strain>MIT 9301</strain>
    </source>
</reference>
<keyword id="KW-1185">Reference proteome</keyword>
<keyword id="KW-0687">Ribonucleoprotein</keyword>
<keyword id="KW-0689">Ribosomal protein</keyword>
<keyword id="KW-0694">RNA-binding</keyword>
<keyword id="KW-0699">rRNA-binding</keyword>
<protein>
    <recommendedName>
        <fullName evidence="1">Large ribosomal subunit protein bL9</fullName>
    </recommendedName>
    <alternativeName>
        <fullName evidence="2">50S ribosomal protein L9</fullName>
    </alternativeName>
</protein>
<evidence type="ECO:0000255" key="1">
    <source>
        <dbReference type="HAMAP-Rule" id="MF_00503"/>
    </source>
</evidence>
<evidence type="ECO:0000305" key="2"/>
<gene>
    <name evidence="1" type="primary">rplI</name>
    <name evidence="1" type="synonym">rpl9</name>
    <name type="ordered locus">P9301_18631</name>
</gene>
<sequence>MAKRVQVALTESIASLGKEGDLVEVAPGYARNFLLPYGKAMNVTPAVLKQIERKKEKEKIAADKLKQEALDFQTALSTIGRFTIKKQVGEDGVLFGTVTNGDVAEAIEAATKKEIDRRNITVPDIHNLGSFTAKIKLHPEVNAEVNIEVTS</sequence>
<dbReference type="EMBL" id="CP000576">
    <property type="protein sequence ID" value="ABO18486.1"/>
    <property type="molecule type" value="Genomic_DNA"/>
</dbReference>
<dbReference type="RefSeq" id="WP_011863768.1">
    <property type="nucleotide sequence ID" value="NC_009091.1"/>
</dbReference>
<dbReference type="SMR" id="A3PFG1"/>
<dbReference type="STRING" id="167546.P9301_18631"/>
<dbReference type="KEGG" id="pmg:P9301_18631"/>
<dbReference type="eggNOG" id="COG0359">
    <property type="taxonomic scope" value="Bacteria"/>
</dbReference>
<dbReference type="HOGENOM" id="CLU_078938_5_1_3"/>
<dbReference type="OrthoDB" id="9788336at2"/>
<dbReference type="Proteomes" id="UP000001430">
    <property type="component" value="Chromosome"/>
</dbReference>
<dbReference type="GO" id="GO:1990904">
    <property type="term" value="C:ribonucleoprotein complex"/>
    <property type="evidence" value="ECO:0007669"/>
    <property type="project" value="UniProtKB-KW"/>
</dbReference>
<dbReference type="GO" id="GO:0005840">
    <property type="term" value="C:ribosome"/>
    <property type="evidence" value="ECO:0007669"/>
    <property type="project" value="UniProtKB-KW"/>
</dbReference>
<dbReference type="GO" id="GO:0019843">
    <property type="term" value="F:rRNA binding"/>
    <property type="evidence" value="ECO:0007669"/>
    <property type="project" value="UniProtKB-UniRule"/>
</dbReference>
<dbReference type="GO" id="GO:0003735">
    <property type="term" value="F:structural constituent of ribosome"/>
    <property type="evidence" value="ECO:0007669"/>
    <property type="project" value="InterPro"/>
</dbReference>
<dbReference type="GO" id="GO:0006412">
    <property type="term" value="P:translation"/>
    <property type="evidence" value="ECO:0007669"/>
    <property type="project" value="UniProtKB-UniRule"/>
</dbReference>
<dbReference type="Gene3D" id="3.10.430.100">
    <property type="entry name" value="Ribosomal protein L9, C-terminal domain"/>
    <property type="match status" value="1"/>
</dbReference>
<dbReference type="Gene3D" id="3.40.5.10">
    <property type="entry name" value="Ribosomal protein L9, N-terminal domain"/>
    <property type="match status" value="1"/>
</dbReference>
<dbReference type="HAMAP" id="MF_00503">
    <property type="entry name" value="Ribosomal_bL9"/>
    <property type="match status" value="1"/>
</dbReference>
<dbReference type="InterPro" id="IPR000244">
    <property type="entry name" value="Ribosomal_bL9"/>
</dbReference>
<dbReference type="InterPro" id="IPR009027">
    <property type="entry name" value="Ribosomal_bL9/RNase_H1_N"/>
</dbReference>
<dbReference type="InterPro" id="IPR020594">
    <property type="entry name" value="Ribosomal_bL9_bac/chp"/>
</dbReference>
<dbReference type="InterPro" id="IPR020069">
    <property type="entry name" value="Ribosomal_bL9_C"/>
</dbReference>
<dbReference type="InterPro" id="IPR036791">
    <property type="entry name" value="Ribosomal_bL9_C_sf"/>
</dbReference>
<dbReference type="InterPro" id="IPR020070">
    <property type="entry name" value="Ribosomal_bL9_N"/>
</dbReference>
<dbReference type="InterPro" id="IPR036935">
    <property type="entry name" value="Ribosomal_bL9_N_sf"/>
</dbReference>
<dbReference type="NCBIfam" id="TIGR00158">
    <property type="entry name" value="L9"/>
    <property type="match status" value="1"/>
</dbReference>
<dbReference type="PANTHER" id="PTHR21368">
    <property type="entry name" value="50S RIBOSOMAL PROTEIN L9"/>
    <property type="match status" value="1"/>
</dbReference>
<dbReference type="Pfam" id="PF03948">
    <property type="entry name" value="Ribosomal_L9_C"/>
    <property type="match status" value="1"/>
</dbReference>
<dbReference type="Pfam" id="PF01281">
    <property type="entry name" value="Ribosomal_L9_N"/>
    <property type="match status" value="1"/>
</dbReference>
<dbReference type="SUPFAM" id="SSF55658">
    <property type="entry name" value="L9 N-domain-like"/>
    <property type="match status" value="1"/>
</dbReference>
<dbReference type="SUPFAM" id="SSF55653">
    <property type="entry name" value="Ribosomal protein L9 C-domain"/>
    <property type="match status" value="1"/>
</dbReference>
<dbReference type="PROSITE" id="PS00651">
    <property type="entry name" value="RIBOSOMAL_L9"/>
    <property type="match status" value="1"/>
</dbReference>
<proteinExistence type="inferred from homology"/>
<name>RL9_PROM0</name>
<accession>A3PFG1</accession>